<sequence length="435" mass="48150">MSQCFAVKGIGGADQATLGSAEILVKYAQLADKRARVYVLVSTWLVVWGIWHVYFVEAVFPNAILWLHYYAASYEFGFVRRGLGGELIRMLTGDHFFAGAYTVLWTSITVWLIALAVVVWLILSTGNRSERRIMLALLVPVLPFAFSYAIYNPHPELFGMTALVAFSIFLTRAHTSRTRVILSTLYGLTMAVLALIHEAIPLEFALGAVLAIIVLSKNATGATRRICTALAIGPGTVSVLLLAVVGRRDIADQLCAHIPHGMVENPWAVATTPQRVLDYIFGRVESHADYHDWVCEHVTPWFNLDWITSAKLVAVVGFRALFGAFLLGLLFFVATTSMIRYVSAVPVRTFFAELRGNLALPVLASALLVPLFITAVDWTRWWVMITLDVAIVYILYAIDRPEIEQPPSRRNVQVFVCVVLVLAVIPTGSANNIGR</sequence>
<name>Y1490_MYCTO</name>
<protein>
    <recommendedName>
        <fullName>Uncharacterized protein MT1536</fullName>
    </recommendedName>
</protein>
<reference key="1">
    <citation type="journal article" date="2002" name="J. Bacteriol.">
        <title>Whole-genome comparison of Mycobacterium tuberculosis clinical and laboratory strains.</title>
        <authorList>
            <person name="Fleischmann R.D."/>
            <person name="Alland D."/>
            <person name="Eisen J.A."/>
            <person name="Carpenter L."/>
            <person name="White O."/>
            <person name="Peterson J.D."/>
            <person name="DeBoy R.T."/>
            <person name="Dodson R.J."/>
            <person name="Gwinn M.L."/>
            <person name="Haft D.H."/>
            <person name="Hickey E.K."/>
            <person name="Kolonay J.F."/>
            <person name="Nelson W.C."/>
            <person name="Umayam L.A."/>
            <person name="Ermolaeva M.D."/>
            <person name="Salzberg S.L."/>
            <person name="Delcher A."/>
            <person name="Utterback T.R."/>
            <person name="Weidman J.F."/>
            <person name="Khouri H.M."/>
            <person name="Gill J."/>
            <person name="Mikula A."/>
            <person name="Bishai W."/>
            <person name="Jacobs W.R. Jr."/>
            <person name="Venter J.C."/>
            <person name="Fraser C.M."/>
        </authorList>
    </citation>
    <scope>NUCLEOTIDE SEQUENCE [LARGE SCALE GENOMIC DNA]</scope>
    <source>
        <strain>CDC 1551 / Oshkosh</strain>
    </source>
</reference>
<proteinExistence type="predicted"/>
<feature type="chain" id="PRO_0000427405" description="Uncharacterized protein MT1536">
    <location>
        <begin position="1"/>
        <end position="435"/>
    </location>
</feature>
<feature type="transmembrane region" description="Helical" evidence="1">
    <location>
        <begin position="40"/>
        <end position="60"/>
    </location>
</feature>
<feature type="transmembrane region" description="Helical" evidence="1">
    <location>
        <begin position="103"/>
        <end position="123"/>
    </location>
</feature>
<feature type="transmembrane region" description="Helical" evidence="1">
    <location>
        <begin position="133"/>
        <end position="153"/>
    </location>
</feature>
<feature type="transmembrane region" description="Helical" evidence="1">
    <location>
        <begin position="195"/>
        <end position="215"/>
    </location>
</feature>
<feature type="transmembrane region" description="Helical" evidence="1">
    <location>
        <begin position="226"/>
        <end position="246"/>
    </location>
</feature>
<feature type="transmembrane region" description="Helical" evidence="1">
    <location>
        <begin position="313"/>
        <end position="333"/>
    </location>
</feature>
<feature type="transmembrane region" description="Helical" evidence="1">
    <location>
        <begin position="358"/>
        <end position="378"/>
    </location>
</feature>
<feature type="transmembrane region" description="Helical" evidence="1">
    <location>
        <begin position="381"/>
        <end position="401"/>
    </location>
</feature>
<feature type="transmembrane region" description="Helical" evidence="1">
    <location>
        <begin position="414"/>
        <end position="434"/>
    </location>
</feature>
<comment type="subcellular location">
    <subcellularLocation>
        <location evidence="2">Cell membrane</location>
        <topology evidence="2">Multi-pass membrane protein</topology>
    </subcellularLocation>
</comment>
<organism>
    <name type="scientific">Mycobacterium tuberculosis (strain CDC 1551 / Oshkosh)</name>
    <dbReference type="NCBI Taxonomy" id="83331"/>
    <lineage>
        <taxon>Bacteria</taxon>
        <taxon>Bacillati</taxon>
        <taxon>Actinomycetota</taxon>
        <taxon>Actinomycetes</taxon>
        <taxon>Mycobacteriales</taxon>
        <taxon>Mycobacteriaceae</taxon>
        <taxon>Mycobacterium</taxon>
        <taxon>Mycobacterium tuberculosis complex</taxon>
    </lineage>
</organism>
<keyword id="KW-1003">Cell membrane</keyword>
<keyword id="KW-0472">Membrane</keyword>
<keyword id="KW-1185">Reference proteome</keyword>
<keyword id="KW-0812">Transmembrane</keyword>
<keyword id="KW-1133">Transmembrane helix</keyword>
<evidence type="ECO:0000255" key="1"/>
<evidence type="ECO:0000305" key="2"/>
<dbReference type="EMBL" id="AE000516">
    <property type="protein sequence ID" value="AAK45803.1"/>
    <property type="molecule type" value="Genomic_DNA"/>
</dbReference>
<dbReference type="PIR" id="E70711">
    <property type="entry name" value="E70711"/>
</dbReference>
<dbReference type="RefSeq" id="WP_003898896.1">
    <property type="nucleotide sequence ID" value="NZ_KK341227.1"/>
</dbReference>
<dbReference type="KEGG" id="mtc:MT1536"/>
<dbReference type="PATRIC" id="fig|83331.31.peg.1653"/>
<dbReference type="HOGENOM" id="CLU_632859_0_0_11"/>
<dbReference type="Proteomes" id="UP000001020">
    <property type="component" value="Chromosome"/>
</dbReference>
<dbReference type="GO" id="GO:0005886">
    <property type="term" value="C:plasma membrane"/>
    <property type="evidence" value="ECO:0007669"/>
    <property type="project" value="UniProtKB-SubCell"/>
</dbReference>
<gene>
    <name type="ordered locus">MT1536</name>
</gene>
<accession>P9WLX0</accession>
<accession>L0T6T5</accession>
<accession>P64857</accession>
<accession>P71771</accession>